<protein>
    <recommendedName>
        <fullName evidence="1">Ribonuclease HIII</fullName>
        <shortName evidence="1">RNase HIII</shortName>
        <ecNumber evidence="1">3.1.26.4</ecNumber>
    </recommendedName>
</protein>
<reference key="1">
    <citation type="submission" date="2008-04" db="EMBL/GenBank/DDBJ databases">
        <title>Complete sequence of chromosome of Exiguobacterium sibiricum 255-15.</title>
        <authorList>
            <consortium name="US DOE Joint Genome Institute"/>
            <person name="Copeland A."/>
            <person name="Lucas S."/>
            <person name="Lapidus A."/>
            <person name="Glavina del Rio T."/>
            <person name="Dalin E."/>
            <person name="Tice H."/>
            <person name="Bruce D."/>
            <person name="Goodwin L."/>
            <person name="Pitluck S."/>
            <person name="Kiss H."/>
            <person name="Chertkov O."/>
            <person name="Monk C."/>
            <person name="Brettin T."/>
            <person name="Detter J.C."/>
            <person name="Han C."/>
            <person name="Kuske C.R."/>
            <person name="Schmutz J."/>
            <person name="Larimer F."/>
            <person name="Land M."/>
            <person name="Hauser L."/>
            <person name="Kyrpides N."/>
            <person name="Mikhailova N."/>
            <person name="Vishnivetskaya T."/>
            <person name="Rodrigues D.F."/>
            <person name="Gilichinsky D."/>
            <person name="Tiedje J."/>
            <person name="Richardson P."/>
        </authorList>
    </citation>
    <scope>NUCLEOTIDE SEQUENCE [LARGE SCALE GENOMIC DNA]</scope>
    <source>
        <strain>DSM 17290 / CCUG 55495 / CIP 109462 / JCM 13490 / 255-15</strain>
    </source>
</reference>
<evidence type="ECO:0000255" key="1">
    <source>
        <dbReference type="HAMAP-Rule" id="MF_00053"/>
    </source>
</evidence>
<evidence type="ECO:0000255" key="2">
    <source>
        <dbReference type="PROSITE-ProRule" id="PRU01319"/>
    </source>
</evidence>
<dbReference type="EC" id="3.1.26.4" evidence="1"/>
<dbReference type="EMBL" id="CP001022">
    <property type="protein sequence ID" value="ACB61627.1"/>
    <property type="molecule type" value="Genomic_DNA"/>
</dbReference>
<dbReference type="RefSeq" id="WP_012371044.1">
    <property type="nucleotide sequence ID" value="NC_010556.1"/>
</dbReference>
<dbReference type="SMR" id="B1YJY9"/>
<dbReference type="STRING" id="262543.Exig_2175"/>
<dbReference type="KEGG" id="esi:Exig_2175"/>
<dbReference type="eggNOG" id="COG1039">
    <property type="taxonomic scope" value="Bacteria"/>
</dbReference>
<dbReference type="HOGENOM" id="CLU_059546_1_0_9"/>
<dbReference type="OrthoDB" id="9777935at2"/>
<dbReference type="Proteomes" id="UP000001681">
    <property type="component" value="Chromosome"/>
</dbReference>
<dbReference type="GO" id="GO:0005737">
    <property type="term" value="C:cytoplasm"/>
    <property type="evidence" value="ECO:0007669"/>
    <property type="project" value="UniProtKB-SubCell"/>
</dbReference>
<dbReference type="GO" id="GO:0032299">
    <property type="term" value="C:ribonuclease H2 complex"/>
    <property type="evidence" value="ECO:0007669"/>
    <property type="project" value="TreeGrafter"/>
</dbReference>
<dbReference type="GO" id="GO:0000287">
    <property type="term" value="F:magnesium ion binding"/>
    <property type="evidence" value="ECO:0007669"/>
    <property type="project" value="UniProtKB-UniRule"/>
</dbReference>
<dbReference type="GO" id="GO:0003723">
    <property type="term" value="F:RNA binding"/>
    <property type="evidence" value="ECO:0007669"/>
    <property type="project" value="InterPro"/>
</dbReference>
<dbReference type="GO" id="GO:0004523">
    <property type="term" value="F:RNA-DNA hybrid ribonuclease activity"/>
    <property type="evidence" value="ECO:0007669"/>
    <property type="project" value="UniProtKB-UniRule"/>
</dbReference>
<dbReference type="GO" id="GO:0043137">
    <property type="term" value="P:DNA replication, removal of RNA primer"/>
    <property type="evidence" value="ECO:0007669"/>
    <property type="project" value="TreeGrafter"/>
</dbReference>
<dbReference type="GO" id="GO:0006298">
    <property type="term" value="P:mismatch repair"/>
    <property type="evidence" value="ECO:0007669"/>
    <property type="project" value="TreeGrafter"/>
</dbReference>
<dbReference type="CDD" id="cd06590">
    <property type="entry name" value="RNase_HII_bacteria_HIII_like"/>
    <property type="match status" value="1"/>
</dbReference>
<dbReference type="CDD" id="cd14796">
    <property type="entry name" value="RNAse_HIII_N"/>
    <property type="match status" value="1"/>
</dbReference>
<dbReference type="FunFam" id="3.30.420.10:FF:000047">
    <property type="entry name" value="Ribonuclease HIII"/>
    <property type="match status" value="1"/>
</dbReference>
<dbReference type="Gene3D" id="3.30.420.10">
    <property type="entry name" value="Ribonuclease H-like superfamily/Ribonuclease H"/>
    <property type="match status" value="1"/>
</dbReference>
<dbReference type="Gene3D" id="3.30.310.10">
    <property type="entry name" value="TATA-Binding Protein"/>
    <property type="match status" value="1"/>
</dbReference>
<dbReference type="HAMAP" id="MF_00053">
    <property type="entry name" value="RNase_HIII"/>
    <property type="match status" value="1"/>
</dbReference>
<dbReference type="InterPro" id="IPR001352">
    <property type="entry name" value="RNase_HII/HIII"/>
</dbReference>
<dbReference type="InterPro" id="IPR024567">
    <property type="entry name" value="RNase_HII/HIII_dom"/>
</dbReference>
<dbReference type="InterPro" id="IPR004641">
    <property type="entry name" value="RNase_HIII"/>
</dbReference>
<dbReference type="InterPro" id="IPR024568">
    <property type="entry name" value="RNase_HIII_N"/>
</dbReference>
<dbReference type="InterPro" id="IPR012337">
    <property type="entry name" value="RNaseH-like_sf"/>
</dbReference>
<dbReference type="InterPro" id="IPR036397">
    <property type="entry name" value="RNaseH_sf"/>
</dbReference>
<dbReference type="InterPro" id="IPR012295">
    <property type="entry name" value="TBP_dom_sf"/>
</dbReference>
<dbReference type="NCBIfam" id="TIGR00716">
    <property type="entry name" value="rnhC"/>
    <property type="match status" value="1"/>
</dbReference>
<dbReference type="PANTHER" id="PTHR10954:SF23">
    <property type="entry name" value="RIBONUCLEASE"/>
    <property type="match status" value="1"/>
</dbReference>
<dbReference type="PANTHER" id="PTHR10954">
    <property type="entry name" value="RIBONUCLEASE H2 SUBUNIT A"/>
    <property type="match status" value="1"/>
</dbReference>
<dbReference type="Pfam" id="PF11858">
    <property type="entry name" value="DUF3378"/>
    <property type="match status" value="1"/>
</dbReference>
<dbReference type="Pfam" id="PF01351">
    <property type="entry name" value="RNase_HII"/>
    <property type="match status" value="1"/>
</dbReference>
<dbReference type="PIRSF" id="PIRSF037748">
    <property type="entry name" value="RnhC"/>
    <property type="match status" value="1"/>
</dbReference>
<dbReference type="SUPFAM" id="SSF53098">
    <property type="entry name" value="Ribonuclease H-like"/>
    <property type="match status" value="1"/>
</dbReference>
<dbReference type="PROSITE" id="PS51975">
    <property type="entry name" value="RNASE_H_2"/>
    <property type="match status" value="1"/>
</dbReference>
<proteinExistence type="inferred from homology"/>
<keyword id="KW-0963">Cytoplasm</keyword>
<keyword id="KW-0255">Endonuclease</keyword>
<keyword id="KW-0378">Hydrolase</keyword>
<keyword id="KW-0460">Magnesium</keyword>
<keyword id="KW-0479">Metal-binding</keyword>
<keyword id="KW-0540">Nuclease</keyword>
<keyword id="KW-1185">Reference proteome</keyword>
<gene>
    <name evidence="1" type="primary">rnhC</name>
    <name type="ordered locus">Exig_2175</name>
</gene>
<organism>
    <name type="scientific">Exiguobacterium sibiricum (strain DSM 17290 / CCUG 55495 / CIP 109462 / JCM 13490 / 255-15)</name>
    <dbReference type="NCBI Taxonomy" id="262543"/>
    <lineage>
        <taxon>Bacteria</taxon>
        <taxon>Bacillati</taxon>
        <taxon>Bacillota</taxon>
        <taxon>Bacilli</taxon>
        <taxon>Bacillales</taxon>
        <taxon>Bacillales Family XII. Incertae Sedis</taxon>
        <taxon>Exiguobacterium</taxon>
    </lineage>
</organism>
<name>RNH3_EXIS2</name>
<feature type="chain" id="PRO_1000091676" description="Ribonuclease HIII">
    <location>
        <begin position="1"/>
        <end position="306"/>
    </location>
</feature>
<feature type="domain" description="RNase H type-2" evidence="2">
    <location>
        <begin position="87"/>
        <end position="302"/>
    </location>
</feature>
<feature type="binding site" evidence="1">
    <location>
        <position position="93"/>
    </location>
    <ligand>
        <name>a divalent metal cation</name>
        <dbReference type="ChEBI" id="CHEBI:60240"/>
    </ligand>
</feature>
<feature type="binding site" evidence="1">
    <location>
        <position position="94"/>
    </location>
    <ligand>
        <name>a divalent metal cation</name>
        <dbReference type="ChEBI" id="CHEBI:60240"/>
    </ligand>
</feature>
<feature type="binding site" evidence="1">
    <location>
        <position position="196"/>
    </location>
    <ligand>
        <name>a divalent metal cation</name>
        <dbReference type="ChEBI" id="CHEBI:60240"/>
    </ligand>
</feature>
<comment type="function">
    <text evidence="1">Endonuclease that specifically degrades the RNA of RNA-DNA hybrids.</text>
</comment>
<comment type="catalytic activity">
    <reaction evidence="1">
        <text>Endonucleolytic cleavage to 5'-phosphomonoester.</text>
        <dbReference type="EC" id="3.1.26.4"/>
    </reaction>
</comment>
<comment type="cofactor">
    <cofactor evidence="1">
        <name>Mn(2+)</name>
        <dbReference type="ChEBI" id="CHEBI:29035"/>
    </cofactor>
    <cofactor evidence="1">
        <name>Mg(2+)</name>
        <dbReference type="ChEBI" id="CHEBI:18420"/>
    </cofactor>
    <text evidence="1">Manganese or magnesium. Binds 1 divalent metal ion per monomer in the absence of substrate. May bind a second metal ion after substrate binding.</text>
</comment>
<comment type="subcellular location">
    <subcellularLocation>
        <location evidence="1">Cytoplasm</location>
    </subcellularLocation>
</comment>
<comment type="similarity">
    <text evidence="1">Belongs to the RNase HII family. RnhC subfamily.</text>
</comment>
<sequence length="306" mass="33822">MGTVVLKLTKEKQETVISDFTRHQVSPPPYARFAARTAGCIVTVYNSGKVMFQGQEAETVAVRYGSPIAKKTVSPASGSLPEGFANWSVVGSDEVGKGDFFGPLVVVAAYVDKTKIELVRELGVRDSKNVSDPEIRTIARDLHAVIPYEYRILHNPDYNRMQRTMTQGKMTALLHNSALNGLLTRLDEPPQAILIDQFAEKAVYYKHLSGETNQVKDNVYFSTKAEGIHVAVAAASILARAIFLKEMDQLSRQTGTEIPKGAGAKVDQVAASLLLRYGPERLQEWTKYHFANTKKAEALAKKRNRP</sequence>
<accession>B1YJY9</accession>